<comment type="subcellular location">
    <subcellularLocation>
        <location evidence="4 5">Cell membrane</location>
        <topology evidence="4 5">Lipid-anchor</topology>
        <topology evidence="4 5">GPI-anchor</topology>
    </subcellularLocation>
    <text>Localized in the plasma membrane of spermatogonia. Localized in intracellular compartment in spermatocytes, probably in the Golgi apparatus.</text>
</comment>
<comment type="alternative products">
    <event type="alternative splicing"/>
    <isoform>
        <id>Q920S2-1</id>
        <name>1</name>
        <sequence type="displayed"/>
    </isoform>
    <isoform>
        <id>Q920S2-2</id>
        <name>2</name>
        <sequence type="described" ref="VSP_034949 VSP_034950"/>
    </isoform>
</comment>
<comment type="tissue specificity">
    <text evidence="4 5">Testis-specific. Expressed in spermatogonia and spermatocytes. Expressed in Leydig and Sertoli cells (at protein level). Expressed 2 weeks after birth and remains highly expressed in the sexually mature testis. Expressed in the seminiferous tubules but not in the interstitial tissues. Expressed in type B spermatogonia and spermatocytes at stages between preleptotene and pachytene during the spermatogenesis cycle.</text>
</comment>
<comment type="PTM">
    <text evidence="4">N-glycosylated.</text>
</comment>
<comment type="similarity">
    <text evidence="3">Belongs to the peptidase S1 family.</text>
</comment>
<accession>Q920S2</accession>
<accession>Q8BX01</accession>
<feature type="signal peptide" evidence="2">
    <location>
        <begin position="1"/>
        <end position="19"/>
    </location>
</feature>
<feature type="propeptide" id="PRO_0000345422" evidence="2">
    <location>
        <begin position="20"/>
        <end position="52"/>
    </location>
</feature>
<feature type="chain" id="PRO_0000345423" description="Serine protease 41">
    <location>
        <begin position="53"/>
        <end position="296"/>
    </location>
</feature>
<feature type="propeptide" id="PRO_0000345424" description="Removed in mature form" evidence="2">
    <location>
        <begin position="297"/>
        <end position="322"/>
    </location>
</feature>
<feature type="domain" description="Peptidase S1" evidence="3">
    <location>
        <begin position="53"/>
        <end position="294"/>
    </location>
</feature>
<feature type="active site" description="Charge relay system" evidence="1">
    <location>
        <position position="93"/>
    </location>
</feature>
<feature type="active site" description="Charge relay system" evidence="1">
    <location>
        <position position="144"/>
    </location>
</feature>
<feature type="active site" description="Charge relay system" evidence="1">
    <location>
        <position position="246"/>
    </location>
</feature>
<feature type="lipid moiety-binding region" description="GPI-anchor amidated asparagine" evidence="2">
    <location>
        <position position="296"/>
    </location>
</feature>
<feature type="glycosylation site" description="N-linked (GlcNAc...) asparagine" evidence="2">
    <location>
        <position position="47"/>
    </location>
</feature>
<feature type="disulfide bond" evidence="3">
    <location>
        <begin position="78"/>
        <end position="94"/>
    </location>
</feature>
<feature type="disulfide bond" evidence="3">
    <location>
        <begin position="178"/>
        <end position="252"/>
    </location>
</feature>
<feature type="disulfide bond" evidence="3">
    <location>
        <begin position="212"/>
        <end position="231"/>
    </location>
</feature>
<feature type="disulfide bond" evidence="3">
    <location>
        <begin position="242"/>
        <end position="270"/>
    </location>
</feature>
<feature type="splice variant" id="VSP_034949" description="In isoform 2." evidence="6">
    <original>KPLPPPYHLREVQVSILNNSRCQELFEIFSLHHLITKDVFCAGAEDGSADTCSGDSGGPL</original>
    <variation>SEISNAGWACGCAICPLFQPQQALKPFSGSGAPRASCLPAQPPPPLLPTCMELPSVLEQG</variation>
    <location>
        <begin position="191"/>
        <end position="250"/>
    </location>
</feature>
<feature type="splice variant" id="VSP_034950" description="In isoform 2." evidence="6">
    <location>
        <begin position="251"/>
        <end position="322"/>
    </location>
</feature>
<feature type="sequence conflict" description="In Ref. 3; BAC33665." evidence="8" ref="3">
    <original>L</original>
    <variation>P</variation>
    <location>
        <position position="83"/>
    </location>
</feature>
<protein>
    <recommendedName>
        <fullName evidence="8">Serine protease 41</fullName>
        <ecNumber>3.4.21.-</ecNumber>
    </recommendedName>
    <alternativeName>
        <fullName>Testis serine protease 1</fullName>
        <shortName>TESSP-1</shortName>
    </alternativeName>
</protein>
<name>PRS41_MOUSE</name>
<dbReference type="EC" id="3.4.21.-"/>
<dbReference type="EMBL" id="AB049453">
    <property type="protein sequence ID" value="BAB68561.1"/>
    <property type="molecule type" value="mRNA"/>
</dbReference>
<dbReference type="EMBL" id="AK049297">
    <property type="protein sequence ID" value="BAC33665.1"/>
    <property type="molecule type" value="mRNA"/>
</dbReference>
<dbReference type="CCDS" id="CCDS28466.1">
    <molecule id="Q920S2-1"/>
</dbReference>
<dbReference type="RefSeq" id="NP_001405694.1">
    <molecule id="Q920S2-2"/>
    <property type="nucleotide sequence ID" value="NM_001418765.1"/>
</dbReference>
<dbReference type="RefSeq" id="NP_081920.1">
    <molecule id="Q920S2-1"/>
    <property type="nucleotide sequence ID" value="NM_027644.2"/>
</dbReference>
<dbReference type="SMR" id="Q920S2"/>
<dbReference type="BioGRID" id="214408">
    <property type="interactions" value="1"/>
</dbReference>
<dbReference type="FunCoup" id="Q920S2">
    <property type="interactions" value="25"/>
</dbReference>
<dbReference type="STRING" id="10090.ENSMUSP00000024926"/>
<dbReference type="MEROPS" id="S01.417"/>
<dbReference type="GlyCosmos" id="Q920S2">
    <property type="glycosylation" value="1 site, No reported glycans"/>
</dbReference>
<dbReference type="GlyGen" id="Q920S2">
    <property type="glycosylation" value="1 site"/>
</dbReference>
<dbReference type="PhosphoSitePlus" id="Q920S2"/>
<dbReference type="PaxDb" id="10090-ENSMUSP00000024926"/>
<dbReference type="ProteomicsDB" id="291905">
    <molecule id="Q920S2-1"/>
</dbReference>
<dbReference type="ProteomicsDB" id="291906">
    <molecule id="Q920S2-2"/>
</dbReference>
<dbReference type="DNASU" id="71003"/>
<dbReference type="Ensembl" id="ENSMUST00000024926.14">
    <molecule id="Q920S2-1"/>
    <property type="protein sequence ID" value="ENSMUSP00000024926.8"/>
    <property type="gene ID" value="ENSMUSG00000024114.16"/>
</dbReference>
<dbReference type="Ensembl" id="ENSMUST00000151797.3">
    <molecule id="Q920S2-2"/>
    <property type="protein sequence ID" value="ENSMUSP00000122453.2"/>
    <property type="gene ID" value="ENSMUSG00000024114.16"/>
</dbReference>
<dbReference type="GeneID" id="71003"/>
<dbReference type="KEGG" id="mmu:71003"/>
<dbReference type="UCSC" id="uc008atv.1">
    <molecule id="Q920S2-1"/>
    <property type="organism name" value="mouse"/>
</dbReference>
<dbReference type="UCSC" id="uc008atw.1">
    <molecule id="Q920S2-2"/>
    <property type="organism name" value="mouse"/>
</dbReference>
<dbReference type="AGR" id="MGI:1918253"/>
<dbReference type="CTD" id="360226"/>
<dbReference type="MGI" id="MGI:1918253">
    <property type="gene designation" value="Prss41"/>
</dbReference>
<dbReference type="VEuPathDB" id="HostDB:ENSMUSG00000024114"/>
<dbReference type="eggNOG" id="KOG3627">
    <property type="taxonomic scope" value="Eukaryota"/>
</dbReference>
<dbReference type="GeneTree" id="ENSGT00940000155138"/>
<dbReference type="HOGENOM" id="CLU_1111092_0_0_1"/>
<dbReference type="InParanoid" id="Q920S2"/>
<dbReference type="OMA" id="QWIRRVM"/>
<dbReference type="OrthoDB" id="93664at2759"/>
<dbReference type="PhylomeDB" id="Q920S2"/>
<dbReference type="TreeFam" id="TF351676"/>
<dbReference type="Reactome" id="R-MMU-163125">
    <property type="pathway name" value="Post-translational modification: synthesis of GPI-anchored proteins"/>
</dbReference>
<dbReference type="BioGRID-ORCS" id="71003">
    <property type="hits" value="4 hits in 76 CRISPR screens"/>
</dbReference>
<dbReference type="ChiTaRS" id="Prss41">
    <property type="organism name" value="mouse"/>
</dbReference>
<dbReference type="PRO" id="PR:Q920S2"/>
<dbReference type="Proteomes" id="UP000000589">
    <property type="component" value="Chromosome 17"/>
</dbReference>
<dbReference type="RNAct" id="Q920S2">
    <property type="molecule type" value="protein"/>
</dbReference>
<dbReference type="Bgee" id="ENSMUSG00000024114">
    <property type="expression patterns" value="Expressed in mesodermal cell in embryo and 59 other cell types or tissues"/>
</dbReference>
<dbReference type="GO" id="GO:0043229">
    <property type="term" value="C:intracellular organelle"/>
    <property type="evidence" value="ECO:0000314"/>
    <property type="project" value="UniProtKB"/>
</dbReference>
<dbReference type="GO" id="GO:0005886">
    <property type="term" value="C:plasma membrane"/>
    <property type="evidence" value="ECO:0000314"/>
    <property type="project" value="UniProtKB"/>
</dbReference>
<dbReference type="GO" id="GO:0098552">
    <property type="term" value="C:side of membrane"/>
    <property type="evidence" value="ECO:0007669"/>
    <property type="project" value="UniProtKB-KW"/>
</dbReference>
<dbReference type="GO" id="GO:0004252">
    <property type="term" value="F:serine-type endopeptidase activity"/>
    <property type="evidence" value="ECO:0007669"/>
    <property type="project" value="InterPro"/>
</dbReference>
<dbReference type="GO" id="GO:0006508">
    <property type="term" value="P:proteolysis"/>
    <property type="evidence" value="ECO:0007669"/>
    <property type="project" value="UniProtKB-KW"/>
</dbReference>
<dbReference type="CDD" id="cd00190">
    <property type="entry name" value="Tryp_SPc"/>
    <property type="match status" value="1"/>
</dbReference>
<dbReference type="FunFam" id="2.40.10.10:FF:000024">
    <property type="entry name" value="Serine protease 53"/>
    <property type="match status" value="1"/>
</dbReference>
<dbReference type="Gene3D" id="2.40.10.10">
    <property type="entry name" value="Trypsin-like serine proteases"/>
    <property type="match status" value="1"/>
</dbReference>
<dbReference type="InterPro" id="IPR009003">
    <property type="entry name" value="Peptidase_S1_PA"/>
</dbReference>
<dbReference type="InterPro" id="IPR043504">
    <property type="entry name" value="Peptidase_S1_PA_chymotrypsin"/>
</dbReference>
<dbReference type="InterPro" id="IPR001314">
    <property type="entry name" value="Peptidase_S1A"/>
</dbReference>
<dbReference type="InterPro" id="IPR001254">
    <property type="entry name" value="Trypsin_dom"/>
</dbReference>
<dbReference type="InterPro" id="IPR018114">
    <property type="entry name" value="TRYPSIN_HIS"/>
</dbReference>
<dbReference type="InterPro" id="IPR033116">
    <property type="entry name" value="TRYPSIN_SER"/>
</dbReference>
<dbReference type="PANTHER" id="PTHR24253:SF79">
    <property type="entry name" value="SERINE PROTEASE 41"/>
    <property type="match status" value="1"/>
</dbReference>
<dbReference type="PANTHER" id="PTHR24253">
    <property type="entry name" value="TRANSMEMBRANE PROTEASE SERINE"/>
    <property type="match status" value="1"/>
</dbReference>
<dbReference type="Pfam" id="PF00089">
    <property type="entry name" value="Trypsin"/>
    <property type="match status" value="1"/>
</dbReference>
<dbReference type="PRINTS" id="PR00722">
    <property type="entry name" value="CHYMOTRYPSIN"/>
</dbReference>
<dbReference type="SMART" id="SM00020">
    <property type="entry name" value="Tryp_SPc"/>
    <property type="match status" value="1"/>
</dbReference>
<dbReference type="SUPFAM" id="SSF50494">
    <property type="entry name" value="Trypsin-like serine proteases"/>
    <property type="match status" value="1"/>
</dbReference>
<dbReference type="PROSITE" id="PS50240">
    <property type="entry name" value="TRYPSIN_DOM"/>
    <property type="match status" value="1"/>
</dbReference>
<dbReference type="PROSITE" id="PS00134">
    <property type="entry name" value="TRYPSIN_HIS"/>
    <property type="match status" value="1"/>
</dbReference>
<dbReference type="PROSITE" id="PS00135">
    <property type="entry name" value="TRYPSIN_SER"/>
    <property type="match status" value="1"/>
</dbReference>
<evidence type="ECO:0000250" key="1"/>
<evidence type="ECO:0000255" key="2"/>
<evidence type="ECO:0000255" key="3">
    <source>
        <dbReference type="PROSITE-ProRule" id="PRU00274"/>
    </source>
</evidence>
<evidence type="ECO:0000269" key="4">
    <source>
    </source>
</evidence>
<evidence type="ECO:0000269" key="5">
    <source>
    </source>
</evidence>
<evidence type="ECO:0000303" key="6">
    <source>
    </source>
</evidence>
<evidence type="ECO:0000303" key="7">
    <source>
    </source>
</evidence>
<evidence type="ECO:0000305" key="8"/>
<evidence type="ECO:0000312" key="9">
    <source>
        <dbReference type="MGI" id="MGI:1918253"/>
    </source>
</evidence>
<gene>
    <name evidence="9" type="primary">Prss41</name>
    <name evidence="7" type="synonym">Tessp1</name>
</gene>
<sequence length="322" mass="36218">MGIQGPVLLLLLLCVMLGKPGSREESQAADLKSTDIKLLSMPCGRRNDTRSRIVGGIESMQGRWPWQASLRLKKSHRCGGSLLSRRWVLTAAHCFRKYLDPEKWTVQLGQLTSKPSYWNRKAYSGRYRVKDIIVNSEDKLKSHDLALLRLASSVTYNKDIQPVCVQPSTFTSQHQPRCWVTGWGVLQEDLKPLPPPYHLREVQVSILNNSRCQELFEIFSLHHLITKDVFCAGAEDGSADTCSGDSGGPLVCNMDGLWYQIGIVSWGIGCGRPNLPGIYTNVSHYYNWIETMMILNGAVRRDLALPLLSITLLQAPWLLRPT</sequence>
<organism>
    <name type="scientific">Mus musculus</name>
    <name type="common">Mouse</name>
    <dbReference type="NCBI Taxonomy" id="10090"/>
    <lineage>
        <taxon>Eukaryota</taxon>
        <taxon>Metazoa</taxon>
        <taxon>Chordata</taxon>
        <taxon>Craniata</taxon>
        <taxon>Vertebrata</taxon>
        <taxon>Euteleostomi</taxon>
        <taxon>Mammalia</taxon>
        <taxon>Eutheria</taxon>
        <taxon>Euarchontoglires</taxon>
        <taxon>Glires</taxon>
        <taxon>Rodentia</taxon>
        <taxon>Myomorpha</taxon>
        <taxon>Muroidea</taxon>
        <taxon>Muridae</taxon>
        <taxon>Murinae</taxon>
        <taxon>Mus</taxon>
        <taxon>Mus</taxon>
    </lineage>
</organism>
<reference key="1">
    <citation type="journal article" date="2005" name="Mol. Reprod. Dev.">
        <title>TESSP-1: a novel serine protease gene expressed in the spermatogonia and spermatocytes of adult mouse testes.</title>
        <authorList>
            <person name="Takano N."/>
            <person name="Matsui H."/>
            <person name="Takahashi T."/>
        </authorList>
    </citation>
    <scope>NUCLEOTIDE SEQUENCE [MRNA] (ISOFORM 1)</scope>
    <scope>SUBCELLULAR LOCATION</scope>
    <scope>ALTERNATIVE SPLICING</scope>
    <scope>TISSUE SPECIFICITY</scope>
    <scope>GLYCOSYLATION</scope>
</reference>
<reference key="2">
    <citation type="journal article" date="2013" name="Biol. Reprod.">
        <title>Three testis-specific paralogous serine proteases play different roles in murine spermatogenesis and are involved in germ cell survival during meiosis.</title>
        <authorList>
            <person name="Yoneda R."/>
            <person name="Takahashi T."/>
            <person name="Matsui H."/>
            <person name="Takano N."/>
            <person name="Hasebe Y."/>
            <person name="Ogiwara K."/>
            <person name="Kimura A.P."/>
        </authorList>
    </citation>
    <scope>NUCLEOTIDE SEQUENCE [MRNA] (ISOFORM 1)</scope>
</reference>
<reference key="3">
    <citation type="journal article" date="2005" name="Science">
        <title>The transcriptional landscape of the mammalian genome.</title>
        <authorList>
            <person name="Carninci P."/>
            <person name="Kasukawa T."/>
            <person name="Katayama S."/>
            <person name="Gough J."/>
            <person name="Frith M.C."/>
            <person name="Maeda N."/>
            <person name="Oyama R."/>
            <person name="Ravasi T."/>
            <person name="Lenhard B."/>
            <person name="Wells C."/>
            <person name="Kodzius R."/>
            <person name="Shimokawa K."/>
            <person name="Bajic V.B."/>
            <person name="Brenner S.E."/>
            <person name="Batalov S."/>
            <person name="Forrest A.R."/>
            <person name="Zavolan M."/>
            <person name="Davis M.J."/>
            <person name="Wilming L.G."/>
            <person name="Aidinis V."/>
            <person name="Allen J.E."/>
            <person name="Ambesi-Impiombato A."/>
            <person name="Apweiler R."/>
            <person name="Aturaliya R.N."/>
            <person name="Bailey T.L."/>
            <person name="Bansal M."/>
            <person name="Baxter L."/>
            <person name="Beisel K.W."/>
            <person name="Bersano T."/>
            <person name="Bono H."/>
            <person name="Chalk A.M."/>
            <person name="Chiu K.P."/>
            <person name="Choudhary V."/>
            <person name="Christoffels A."/>
            <person name="Clutterbuck D.R."/>
            <person name="Crowe M.L."/>
            <person name="Dalla E."/>
            <person name="Dalrymple B.P."/>
            <person name="de Bono B."/>
            <person name="Della Gatta G."/>
            <person name="di Bernardo D."/>
            <person name="Down T."/>
            <person name="Engstrom P."/>
            <person name="Fagiolini M."/>
            <person name="Faulkner G."/>
            <person name="Fletcher C.F."/>
            <person name="Fukushima T."/>
            <person name="Furuno M."/>
            <person name="Futaki S."/>
            <person name="Gariboldi M."/>
            <person name="Georgii-Hemming P."/>
            <person name="Gingeras T.R."/>
            <person name="Gojobori T."/>
            <person name="Green R.E."/>
            <person name="Gustincich S."/>
            <person name="Harbers M."/>
            <person name="Hayashi Y."/>
            <person name="Hensch T.K."/>
            <person name="Hirokawa N."/>
            <person name="Hill D."/>
            <person name="Huminiecki L."/>
            <person name="Iacono M."/>
            <person name="Ikeo K."/>
            <person name="Iwama A."/>
            <person name="Ishikawa T."/>
            <person name="Jakt M."/>
            <person name="Kanapin A."/>
            <person name="Katoh M."/>
            <person name="Kawasawa Y."/>
            <person name="Kelso J."/>
            <person name="Kitamura H."/>
            <person name="Kitano H."/>
            <person name="Kollias G."/>
            <person name="Krishnan S.P."/>
            <person name="Kruger A."/>
            <person name="Kummerfeld S.K."/>
            <person name="Kurochkin I.V."/>
            <person name="Lareau L.F."/>
            <person name="Lazarevic D."/>
            <person name="Lipovich L."/>
            <person name="Liu J."/>
            <person name="Liuni S."/>
            <person name="McWilliam S."/>
            <person name="Madan Babu M."/>
            <person name="Madera M."/>
            <person name="Marchionni L."/>
            <person name="Matsuda H."/>
            <person name="Matsuzawa S."/>
            <person name="Miki H."/>
            <person name="Mignone F."/>
            <person name="Miyake S."/>
            <person name="Morris K."/>
            <person name="Mottagui-Tabar S."/>
            <person name="Mulder N."/>
            <person name="Nakano N."/>
            <person name="Nakauchi H."/>
            <person name="Ng P."/>
            <person name="Nilsson R."/>
            <person name="Nishiguchi S."/>
            <person name="Nishikawa S."/>
            <person name="Nori F."/>
            <person name="Ohara O."/>
            <person name="Okazaki Y."/>
            <person name="Orlando V."/>
            <person name="Pang K.C."/>
            <person name="Pavan W.J."/>
            <person name="Pavesi G."/>
            <person name="Pesole G."/>
            <person name="Petrovsky N."/>
            <person name="Piazza S."/>
            <person name="Reed J."/>
            <person name="Reid J.F."/>
            <person name="Ring B.Z."/>
            <person name="Ringwald M."/>
            <person name="Rost B."/>
            <person name="Ruan Y."/>
            <person name="Salzberg S.L."/>
            <person name="Sandelin A."/>
            <person name="Schneider C."/>
            <person name="Schoenbach C."/>
            <person name="Sekiguchi K."/>
            <person name="Semple C.A."/>
            <person name="Seno S."/>
            <person name="Sessa L."/>
            <person name="Sheng Y."/>
            <person name="Shibata Y."/>
            <person name="Shimada H."/>
            <person name="Shimada K."/>
            <person name="Silva D."/>
            <person name="Sinclair B."/>
            <person name="Sperling S."/>
            <person name="Stupka E."/>
            <person name="Sugiura K."/>
            <person name="Sultana R."/>
            <person name="Takenaka Y."/>
            <person name="Taki K."/>
            <person name="Tammoja K."/>
            <person name="Tan S.L."/>
            <person name="Tang S."/>
            <person name="Taylor M.S."/>
            <person name="Tegner J."/>
            <person name="Teichmann S.A."/>
            <person name="Ueda H.R."/>
            <person name="van Nimwegen E."/>
            <person name="Verardo R."/>
            <person name="Wei C.L."/>
            <person name="Yagi K."/>
            <person name="Yamanishi H."/>
            <person name="Zabarovsky E."/>
            <person name="Zhu S."/>
            <person name="Zimmer A."/>
            <person name="Hide W."/>
            <person name="Bult C."/>
            <person name="Grimmond S.M."/>
            <person name="Teasdale R.D."/>
            <person name="Liu E.T."/>
            <person name="Brusic V."/>
            <person name="Quackenbush J."/>
            <person name="Wahlestedt C."/>
            <person name="Mattick J.S."/>
            <person name="Hume D.A."/>
            <person name="Kai C."/>
            <person name="Sasaki D."/>
            <person name="Tomaru Y."/>
            <person name="Fukuda S."/>
            <person name="Kanamori-Katayama M."/>
            <person name="Suzuki M."/>
            <person name="Aoki J."/>
            <person name="Arakawa T."/>
            <person name="Iida J."/>
            <person name="Imamura K."/>
            <person name="Itoh M."/>
            <person name="Kato T."/>
            <person name="Kawaji H."/>
            <person name="Kawagashira N."/>
            <person name="Kawashima T."/>
            <person name="Kojima M."/>
            <person name="Kondo S."/>
            <person name="Konno H."/>
            <person name="Nakano K."/>
            <person name="Ninomiya N."/>
            <person name="Nishio T."/>
            <person name="Okada M."/>
            <person name="Plessy C."/>
            <person name="Shibata K."/>
            <person name="Shiraki T."/>
            <person name="Suzuki S."/>
            <person name="Tagami M."/>
            <person name="Waki K."/>
            <person name="Watahiki A."/>
            <person name="Okamura-Oho Y."/>
            <person name="Suzuki H."/>
            <person name="Kawai J."/>
            <person name="Hayashizaki Y."/>
        </authorList>
    </citation>
    <scope>NUCLEOTIDE SEQUENCE [LARGE SCALE MRNA] (ISOFORM 2)</scope>
    <source>
        <strain>C57BL/6J</strain>
        <tissue>Embryonic stem cell</tissue>
    </source>
</reference>
<reference key="4">
    <citation type="journal article" date="2009" name="Zool. Sci.">
        <title>Two distinct localization patterns of testis-specific serine protease 1 (TESSP1) in the seminiferous tubules of the mouse testis.</title>
        <authorList>
            <person name="Takano N."/>
            <person name="Kimura A."/>
            <person name="Takahashi T."/>
        </authorList>
    </citation>
    <scope>SUBCELLULAR LOCATION</scope>
    <scope>TISSUE SPECIFICITY</scope>
</reference>
<keyword id="KW-0025">Alternative splicing</keyword>
<keyword id="KW-1003">Cell membrane</keyword>
<keyword id="KW-1015">Disulfide bond</keyword>
<keyword id="KW-0325">Glycoprotein</keyword>
<keyword id="KW-0336">GPI-anchor</keyword>
<keyword id="KW-0378">Hydrolase</keyword>
<keyword id="KW-0449">Lipoprotein</keyword>
<keyword id="KW-0472">Membrane</keyword>
<keyword id="KW-0645">Protease</keyword>
<keyword id="KW-1185">Reference proteome</keyword>
<keyword id="KW-0720">Serine protease</keyword>
<keyword id="KW-0732">Signal</keyword>
<proteinExistence type="evidence at protein level"/>